<evidence type="ECO:0000255" key="1">
    <source>
        <dbReference type="HAMAP-Rule" id="MF_00368"/>
    </source>
</evidence>
<evidence type="ECO:0000305" key="2"/>
<dbReference type="EMBL" id="CP000747">
    <property type="protein sequence ID" value="ACG77631.1"/>
    <property type="molecule type" value="Genomic_DNA"/>
</dbReference>
<dbReference type="RefSeq" id="WP_012521776.1">
    <property type="nucleotide sequence ID" value="NC_011144.1"/>
</dbReference>
<dbReference type="SMR" id="B4R8K4"/>
<dbReference type="STRING" id="450851.PHZ_c1217"/>
<dbReference type="KEGG" id="pzu:PHZ_c1217"/>
<dbReference type="eggNOG" id="COG0222">
    <property type="taxonomic scope" value="Bacteria"/>
</dbReference>
<dbReference type="HOGENOM" id="CLU_086499_3_0_5"/>
<dbReference type="OrthoDB" id="9811748at2"/>
<dbReference type="Proteomes" id="UP000001868">
    <property type="component" value="Chromosome"/>
</dbReference>
<dbReference type="GO" id="GO:0022625">
    <property type="term" value="C:cytosolic large ribosomal subunit"/>
    <property type="evidence" value="ECO:0007669"/>
    <property type="project" value="TreeGrafter"/>
</dbReference>
<dbReference type="GO" id="GO:0003729">
    <property type="term" value="F:mRNA binding"/>
    <property type="evidence" value="ECO:0007669"/>
    <property type="project" value="TreeGrafter"/>
</dbReference>
<dbReference type="GO" id="GO:0003735">
    <property type="term" value="F:structural constituent of ribosome"/>
    <property type="evidence" value="ECO:0007669"/>
    <property type="project" value="InterPro"/>
</dbReference>
<dbReference type="GO" id="GO:0006412">
    <property type="term" value="P:translation"/>
    <property type="evidence" value="ECO:0007669"/>
    <property type="project" value="UniProtKB-UniRule"/>
</dbReference>
<dbReference type="CDD" id="cd00387">
    <property type="entry name" value="Ribosomal_L7_L12"/>
    <property type="match status" value="1"/>
</dbReference>
<dbReference type="FunFam" id="1.20.5.710:FF:000007">
    <property type="entry name" value="50S ribosomal protein L7/L12"/>
    <property type="match status" value="1"/>
</dbReference>
<dbReference type="FunFam" id="3.30.1390.10:FF:000001">
    <property type="entry name" value="50S ribosomal protein L7/L12"/>
    <property type="match status" value="1"/>
</dbReference>
<dbReference type="Gene3D" id="3.30.1390.10">
    <property type="match status" value="1"/>
</dbReference>
<dbReference type="Gene3D" id="1.20.5.710">
    <property type="entry name" value="Single helix bin"/>
    <property type="match status" value="1"/>
</dbReference>
<dbReference type="HAMAP" id="MF_00368">
    <property type="entry name" value="Ribosomal_bL12"/>
    <property type="match status" value="1"/>
</dbReference>
<dbReference type="InterPro" id="IPR000206">
    <property type="entry name" value="Ribosomal_bL12"/>
</dbReference>
<dbReference type="InterPro" id="IPR013823">
    <property type="entry name" value="Ribosomal_bL12_C"/>
</dbReference>
<dbReference type="InterPro" id="IPR014719">
    <property type="entry name" value="Ribosomal_bL12_C/ClpS-like"/>
</dbReference>
<dbReference type="InterPro" id="IPR008932">
    <property type="entry name" value="Ribosomal_bL12_oligo"/>
</dbReference>
<dbReference type="InterPro" id="IPR036235">
    <property type="entry name" value="Ribosomal_bL12_oligo_N_sf"/>
</dbReference>
<dbReference type="NCBIfam" id="TIGR00855">
    <property type="entry name" value="L12"/>
    <property type="match status" value="1"/>
</dbReference>
<dbReference type="PANTHER" id="PTHR45987">
    <property type="entry name" value="39S RIBOSOMAL PROTEIN L12"/>
    <property type="match status" value="1"/>
</dbReference>
<dbReference type="PANTHER" id="PTHR45987:SF4">
    <property type="entry name" value="LARGE RIBOSOMAL SUBUNIT PROTEIN BL12M"/>
    <property type="match status" value="1"/>
</dbReference>
<dbReference type="Pfam" id="PF00542">
    <property type="entry name" value="Ribosomal_L12"/>
    <property type="match status" value="1"/>
</dbReference>
<dbReference type="Pfam" id="PF16320">
    <property type="entry name" value="Ribosomal_L12_N"/>
    <property type="match status" value="1"/>
</dbReference>
<dbReference type="SUPFAM" id="SSF54736">
    <property type="entry name" value="ClpS-like"/>
    <property type="match status" value="1"/>
</dbReference>
<dbReference type="SUPFAM" id="SSF48300">
    <property type="entry name" value="Ribosomal protein L7/12, oligomerisation (N-terminal) domain"/>
    <property type="match status" value="1"/>
</dbReference>
<protein>
    <recommendedName>
        <fullName evidence="1">Large ribosomal subunit protein bL12</fullName>
    </recommendedName>
    <alternativeName>
        <fullName evidence="2">50S ribosomal protein L7/L12</fullName>
    </alternativeName>
</protein>
<comment type="function">
    <text evidence="1">Forms part of the ribosomal stalk which helps the ribosome interact with GTP-bound translation factors. Is thus essential for accurate translation.</text>
</comment>
<comment type="subunit">
    <text evidence="1">Homodimer. Part of the ribosomal stalk of the 50S ribosomal subunit. Forms a multimeric L10(L12)X complex, where L10 forms an elongated spine to which 2 to 4 L12 dimers bind in a sequential fashion. Binds GTP-bound translation factors.</text>
</comment>
<comment type="similarity">
    <text evidence="1">Belongs to the bacterial ribosomal protein bL12 family.</text>
</comment>
<organism>
    <name type="scientific">Phenylobacterium zucineum (strain HLK1)</name>
    <dbReference type="NCBI Taxonomy" id="450851"/>
    <lineage>
        <taxon>Bacteria</taxon>
        <taxon>Pseudomonadati</taxon>
        <taxon>Pseudomonadota</taxon>
        <taxon>Alphaproteobacteria</taxon>
        <taxon>Caulobacterales</taxon>
        <taxon>Caulobacteraceae</taxon>
        <taxon>Phenylobacterium</taxon>
    </lineage>
</organism>
<keyword id="KW-1185">Reference proteome</keyword>
<keyword id="KW-0687">Ribonucleoprotein</keyword>
<keyword id="KW-0689">Ribosomal protein</keyword>
<gene>
    <name evidence="1" type="primary">rplL</name>
    <name type="ordered locus">PHZ_c1217</name>
</gene>
<name>RL7_PHEZH</name>
<accession>B4R8K4</accession>
<reference key="1">
    <citation type="journal article" date="2008" name="BMC Genomics">
        <title>Complete genome of Phenylobacterium zucineum - a novel facultative intracellular bacterium isolated from human erythroleukemia cell line K562.</title>
        <authorList>
            <person name="Luo Y."/>
            <person name="Xu X."/>
            <person name="Ding Z."/>
            <person name="Liu Z."/>
            <person name="Zhang B."/>
            <person name="Yan Z."/>
            <person name="Sun J."/>
            <person name="Hu S."/>
            <person name="Hu X."/>
        </authorList>
    </citation>
    <scope>NUCLEOTIDE SEQUENCE [LARGE SCALE GENOMIC DNA]</scope>
    <source>
        <strain>HLK1</strain>
    </source>
</reference>
<proteinExistence type="inferred from homology"/>
<sequence length="128" mass="13318">MANLEKLVEDLSALTVLEAAELSKMLEEKWGVSAAAPVAVAAAPAAGGGEAAPAGEEQTEFTVVLTAGGDKKINVIKEVRGVRPDLGLKEAKDLVEGAPQNVKENVSKQEAEEIKKKLEEAGASVQIK</sequence>
<feature type="chain" id="PRO_1000121468" description="Large ribosomal subunit protein bL12">
    <location>
        <begin position="1"/>
        <end position="128"/>
    </location>
</feature>